<comment type="function">
    <text evidence="1">Acts as a negative regulator of innate and adaptive immunity by maintaining immune homeostasis. Negative regulator of Toll-like receptor and T-cell receptor function. Prevents hyperresponsiveness of the immune system and maintains immune homeostasis. Inhibits jun/ap1 and NF-kappa-B activation. Promotes Fas-induced apoptosis (By similarity).</text>
</comment>
<comment type="domain">
    <text evidence="1">The central region was initially thought to constitute a DED (death effector) domain. However, 3D-structure data reveal a previously uncharacterized fold that is different from the predicted fold of a DED (death effector) domain. It consists of a large, hydrophobic central cavity that is poised for cofactor binding (By similarity).</text>
</comment>
<comment type="similarity">
    <text evidence="2">Belongs to the TNFAIP8 family. TNFAIP8L2 subfamily.</text>
</comment>
<organism>
    <name type="scientific">Xenopus tropicalis</name>
    <name type="common">Western clawed frog</name>
    <name type="synonym">Silurana tropicalis</name>
    <dbReference type="NCBI Taxonomy" id="8364"/>
    <lineage>
        <taxon>Eukaryota</taxon>
        <taxon>Metazoa</taxon>
        <taxon>Chordata</taxon>
        <taxon>Craniata</taxon>
        <taxon>Vertebrata</taxon>
        <taxon>Euteleostomi</taxon>
        <taxon>Amphibia</taxon>
        <taxon>Batrachia</taxon>
        <taxon>Anura</taxon>
        <taxon>Pipoidea</taxon>
        <taxon>Pipidae</taxon>
        <taxon>Xenopodinae</taxon>
        <taxon>Xenopus</taxon>
        <taxon>Silurana</taxon>
    </lineage>
</organism>
<keyword id="KW-0391">Immunity</keyword>
<keyword id="KW-0399">Innate immunity</keyword>
<keyword id="KW-1185">Reference proteome</keyword>
<protein>
    <recommendedName>
        <fullName>Tumor necrosis factor alpha-induced protein 8-like protein 2</fullName>
        <shortName>TIPE2</shortName>
        <shortName>TNF alpha-induced protein 8-like protein 2</shortName>
        <shortName>TNFAIP8-like protein 2</shortName>
    </recommendedName>
</protein>
<gene>
    <name type="primary">tnfaip8l2</name>
</gene>
<dbReference type="EMBL" id="BC091073">
    <property type="protein sequence ID" value="AAH91073.1"/>
    <property type="molecule type" value="mRNA"/>
</dbReference>
<dbReference type="RefSeq" id="NP_001025614.1">
    <property type="nucleotide sequence ID" value="NM_001030443.1"/>
</dbReference>
<dbReference type="RefSeq" id="XP_012825293.1">
    <property type="nucleotide sequence ID" value="XM_012969839.2"/>
</dbReference>
<dbReference type="RefSeq" id="XP_012825294.1">
    <property type="nucleotide sequence ID" value="XM_012969840.2"/>
</dbReference>
<dbReference type="RefSeq" id="XP_012825295.1">
    <property type="nucleotide sequence ID" value="XM_012969841.2"/>
</dbReference>
<dbReference type="RefSeq" id="XP_012825296.1">
    <property type="nucleotide sequence ID" value="XM_012969842.2"/>
</dbReference>
<dbReference type="SMR" id="Q5BKH4"/>
<dbReference type="PaxDb" id="8364-ENSXETP00000017843"/>
<dbReference type="DNASU" id="595002"/>
<dbReference type="GeneID" id="595002"/>
<dbReference type="KEGG" id="xtr:595002"/>
<dbReference type="AGR" id="Xenbase:XB-GENE-1005115"/>
<dbReference type="CTD" id="79626"/>
<dbReference type="Xenbase" id="XB-GENE-1005115">
    <property type="gene designation" value="tnfaip8l2"/>
</dbReference>
<dbReference type="eggNOG" id="ENOG502QST4">
    <property type="taxonomic scope" value="Eukaryota"/>
</dbReference>
<dbReference type="HOGENOM" id="CLU_085918_1_0_1"/>
<dbReference type="InParanoid" id="Q5BKH4"/>
<dbReference type="OMA" id="HNRINHV"/>
<dbReference type="OrthoDB" id="10055976at2759"/>
<dbReference type="PhylomeDB" id="Q5BKH4"/>
<dbReference type="TreeFam" id="TF323415"/>
<dbReference type="Reactome" id="R-XTR-1483255">
    <property type="pathway name" value="PI Metabolism"/>
</dbReference>
<dbReference type="Proteomes" id="UP000008143">
    <property type="component" value="Chromosome 8"/>
</dbReference>
<dbReference type="Bgee" id="ENSXETG00000008142">
    <property type="expression patterns" value="Expressed in liver and 9 other cell types or tissues"/>
</dbReference>
<dbReference type="GO" id="GO:0045087">
    <property type="term" value="P:innate immune response"/>
    <property type="evidence" value="ECO:0007669"/>
    <property type="project" value="UniProtKB-KW"/>
</dbReference>
<dbReference type="GO" id="GO:0042981">
    <property type="term" value="P:regulation of apoptotic process"/>
    <property type="evidence" value="ECO:0007669"/>
    <property type="project" value="InterPro"/>
</dbReference>
<dbReference type="FunFam" id="1.20.1440.160:FF:000001">
    <property type="entry name" value="Tumor necrosis factor alpha-induced protein 8-like 1"/>
    <property type="match status" value="1"/>
</dbReference>
<dbReference type="Gene3D" id="1.20.1440.160">
    <property type="entry name" value="Tumor necrosis factor alpha-induced protein 8-like"/>
    <property type="match status" value="1"/>
</dbReference>
<dbReference type="InterPro" id="IPR008477">
    <property type="entry name" value="TNFAIP8-like"/>
</dbReference>
<dbReference type="InterPro" id="IPR038355">
    <property type="entry name" value="TNFAIP8_sf"/>
</dbReference>
<dbReference type="PANTHER" id="PTHR12757:SF4">
    <property type="entry name" value="TUMOR NECROSIS FACTOR ALPHA-INDUCED PROTEIN 8-LIKE PROTEIN 2"/>
    <property type="match status" value="1"/>
</dbReference>
<dbReference type="PANTHER" id="PTHR12757">
    <property type="entry name" value="TUMOR NECROSIS FACTOR INDUCED PROTEIN"/>
    <property type="match status" value="1"/>
</dbReference>
<dbReference type="Pfam" id="PF05527">
    <property type="entry name" value="DUF758"/>
    <property type="match status" value="1"/>
</dbReference>
<accession>Q5BKH4</accession>
<proteinExistence type="evidence at transcript level"/>
<evidence type="ECO:0000250" key="1"/>
<evidence type="ECO:0000305" key="2"/>
<feature type="chain" id="PRO_0000285776" description="Tumor necrosis factor alpha-induced protein 8-like protein 2">
    <location>
        <begin position="1"/>
        <end position="186"/>
    </location>
</feature>
<name>TP8L2_XENTR</name>
<sequence length="186" mass="21536">METFSSKDLALQAQKKILSRMASKSMVNMFIDETSSEILDELYRVSKEYTKNKSESQKVIKNLIKIAVKIGVLFRHNRFSPEELVLAQDFKSKLHNGAMTAISFYEVEFTFEKDVLPDILMECKNLLLRLVEKHLTPKSHGRIQHVFNHFADPEMLCQLYDPKGSLWPHLQKICHGLNKLIDEGKL</sequence>
<reference key="1">
    <citation type="submission" date="2005-03" db="EMBL/GenBank/DDBJ databases">
        <authorList>
            <consortium name="NIH - Xenopus Gene Collection (XGC) project"/>
        </authorList>
    </citation>
    <scope>NUCLEOTIDE SEQUENCE [LARGE SCALE MRNA]</scope>
</reference>